<dbReference type="EMBL" id="AE015451">
    <property type="protein sequence ID" value="AAN69790.1"/>
    <property type="molecule type" value="Genomic_DNA"/>
</dbReference>
<dbReference type="RefSeq" id="NP_746326.1">
    <property type="nucleotide sequence ID" value="NC_002947.4"/>
</dbReference>
<dbReference type="RefSeq" id="WP_010954964.1">
    <property type="nucleotide sequence ID" value="NZ_CP169744.1"/>
</dbReference>
<dbReference type="SMR" id="Q88F89"/>
<dbReference type="STRING" id="160488.PP_4209"/>
<dbReference type="PaxDb" id="160488-PP_4209"/>
<dbReference type="KEGG" id="ppu:PP_4209"/>
<dbReference type="PATRIC" id="fig|160488.4.peg.4477"/>
<dbReference type="eggNOG" id="COG0845">
    <property type="taxonomic scope" value="Bacteria"/>
</dbReference>
<dbReference type="HOGENOM" id="CLU_018816_14_1_6"/>
<dbReference type="OrthoDB" id="9791520at2"/>
<dbReference type="PhylomeDB" id="Q88F89"/>
<dbReference type="BioCyc" id="PPUT160488:G1G01-4478-MONOMER"/>
<dbReference type="Proteomes" id="UP000000556">
    <property type="component" value="Chromosome"/>
</dbReference>
<dbReference type="GO" id="GO:1990281">
    <property type="term" value="C:efflux pump complex"/>
    <property type="evidence" value="ECO:0007669"/>
    <property type="project" value="TreeGrafter"/>
</dbReference>
<dbReference type="GO" id="GO:0019898">
    <property type="term" value="C:extrinsic component of membrane"/>
    <property type="evidence" value="ECO:0007669"/>
    <property type="project" value="InterPro"/>
</dbReference>
<dbReference type="GO" id="GO:1990195">
    <property type="term" value="C:macrolide transmembrane transporter complex"/>
    <property type="evidence" value="ECO:0007669"/>
    <property type="project" value="InterPro"/>
</dbReference>
<dbReference type="GO" id="GO:0042597">
    <property type="term" value="C:periplasmic space"/>
    <property type="evidence" value="ECO:0007669"/>
    <property type="project" value="UniProtKB-SubCell"/>
</dbReference>
<dbReference type="GO" id="GO:0015562">
    <property type="term" value="F:efflux transmembrane transporter activity"/>
    <property type="evidence" value="ECO:0007669"/>
    <property type="project" value="TreeGrafter"/>
</dbReference>
<dbReference type="GO" id="GO:1990961">
    <property type="term" value="P:xenobiotic detoxification by transmembrane export across the plasma membrane"/>
    <property type="evidence" value="ECO:0007669"/>
    <property type="project" value="InterPro"/>
</dbReference>
<dbReference type="Gene3D" id="2.40.30.170">
    <property type="match status" value="1"/>
</dbReference>
<dbReference type="Gene3D" id="2.40.420.20">
    <property type="match status" value="1"/>
</dbReference>
<dbReference type="Gene3D" id="2.40.50.100">
    <property type="match status" value="1"/>
</dbReference>
<dbReference type="Gene3D" id="6.10.140.1990">
    <property type="match status" value="1"/>
</dbReference>
<dbReference type="InterPro" id="IPR032317">
    <property type="entry name" value="CusB_D23"/>
</dbReference>
<dbReference type="InterPro" id="IPR030190">
    <property type="entry name" value="MacA_alpha-hairpin_sf"/>
</dbReference>
<dbReference type="InterPro" id="IPR006143">
    <property type="entry name" value="RND_pump_MFP"/>
</dbReference>
<dbReference type="InterPro" id="IPR006311">
    <property type="entry name" value="TAT_signal"/>
</dbReference>
<dbReference type="NCBIfam" id="TIGR01730">
    <property type="entry name" value="RND_mfp"/>
    <property type="match status" value="1"/>
</dbReference>
<dbReference type="PANTHER" id="PTHR30469">
    <property type="entry name" value="MULTIDRUG RESISTANCE PROTEIN MDTA"/>
    <property type="match status" value="1"/>
</dbReference>
<dbReference type="PANTHER" id="PTHR30469:SF33">
    <property type="entry name" value="SLR1207 PROTEIN"/>
    <property type="match status" value="1"/>
</dbReference>
<dbReference type="Pfam" id="PF16576">
    <property type="entry name" value="HlyD_D23"/>
    <property type="match status" value="1"/>
</dbReference>
<dbReference type="SUPFAM" id="SSF111369">
    <property type="entry name" value="HlyD-like secretion proteins"/>
    <property type="match status" value="1"/>
</dbReference>
<dbReference type="PROSITE" id="PS51318">
    <property type="entry name" value="TAT"/>
    <property type="match status" value="1"/>
</dbReference>
<feature type="signal peptide" description="Tat-type signal" evidence="3">
    <location>
        <begin position="1"/>
        <end position="36"/>
    </location>
</feature>
<feature type="chain" id="PRO_0000458882" description="Pyoverdine export membrane fusion protein PvdR">
    <location>
        <begin position="37"/>
        <end position="392"/>
    </location>
</feature>
<feature type="region of interest" description="Disordered" evidence="4">
    <location>
        <begin position="267"/>
        <end position="286"/>
    </location>
</feature>
<feature type="coiled-coil region" evidence="2">
    <location>
        <begin position="109"/>
        <end position="181"/>
    </location>
</feature>
<protein>
    <recommendedName>
        <fullName evidence="9">Pyoverdine export membrane fusion protein PvdR</fullName>
    </recommendedName>
    <alternativeName>
        <fullName evidence="8">Periplasmic adapter protein PvdR</fullName>
    </alternativeName>
</protein>
<name>PVDR_PSEPK</name>
<sequence length="392" mass="41975">MRRSTHTRRRLLLGGLGLLGLGSLLAWTSLPFGAQPVSTVAVTRADIESSVTALGTLQPRRYVDVGAQASGQIRNLHVEVGDQVHKGQLLVEIDPSTQQAKLDAGRFSIDNLKAQLAEQRAQLKLAQQQLKRQRDLAAVGATREEDLQTAEAQLNVTQARIDMYQAQIRQANASLRSDEAELGYTRIFAPMDGTVVAVDAREGQTLNAQQQTPLILRIAKLSPMTVWAQVSEADIGKIQPGMTAYFTTLAGGKRRWTSTVRQVLPIPPKPLDQTSQGGGSPASATAGATGSQVVQYTVLLDVDNPDGALMAEMTTQVFFVVGQASQVLSAPLAALDDSDNEGLRLAQVFGRDGKVEQRKVRTGLSDRLRVQILDGLSEGDRLVIGAPAASGG</sequence>
<accession>Q88F89</accession>
<comment type="function">
    <text evidence="1 5 6">Part of the tripartite efflux system PvdRT-OpmQ required for the secretion into the extracellular milieu of the siderophore pyoverdine (PVD), which is involved in iron acquisition (PubMed:30346656, PubMed:36807028). This subunit is an adapter protein that stimulates the ATPase activity of PvdT and connects the inner and outer membrane components (PubMed:36807028). The system is responsible for export of newly synthesized PVD after the final steps of biosynthesis have taken place in the periplasm (By similarity). It is also responsible for recycling of PVD after internalization of ferri-PVD into the periplasm by the outer-membrane receptor FpvA and release of iron from PVD, thus making PVD available for new cycles of iron uptake (By similarity). Contributes to resistance against ampicillin (PubMed:30346656).</text>
</comment>
<comment type="subunit">
    <text evidence="6 10">Part of the tripartite efflux system PvdRT-OpmQ, which is composed of an inner membrane component with both ATPase and permease domains, PvdT, a periplasmic membrane fusion protein, PvdR, and an outer membrane component, OpmQ.</text>
</comment>
<comment type="subcellular location">
    <subcellularLocation>
        <location evidence="6">Periplasm</location>
    </subcellularLocation>
</comment>
<comment type="induction">
    <text evidence="5">Expression is stimulated by iron limitation.</text>
</comment>
<comment type="PTM">
    <text evidence="3">Predicted to be exported by the Tat system. The position of the signal peptide cleavage has not been experimentally proven.</text>
</comment>
<comment type="disruption phenotype">
    <text evidence="5">Deletion of pvdRT-opmQ leads to reduced amounts of PVD in the medium and decreased growth under iron limitation (PubMed:30346656). Deletion of both PvdRT-OpmQ and MdtABC-OpmB systems strongly affects growth under iron limitation as well as PVD secretion (PubMed:30346656).</text>
</comment>
<comment type="similarity">
    <text evidence="9">Belongs to the membrane fusion protein (MFP) (TC 8.A.1) family.</text>
</comment>
<reference key="1">
    <citation type="journal article" date="2002" name="Environ. Microbiol.">
        <title>Complete genome sequence and comparative analysis of the metabolically versatile Pseudomonas putida KT2440.</title>
        <authorList>
            <person name="Nelson K.E."/>
            <person name="Weinel C."/>
            <person name="Paulsen I.T."/>
            <person name="Dodson R.J."/>
            <person name="Hilbert H."/>
            <person name="Martins dos Santos V.A.P."/>
            <person name="Fouts D.E."/>
            <person name="Gill S.R."/>
            <person name="Pop M."/>
            <person name="Holmes M."/>
            <person name="Brinkac L.M."/>
            <person name="Beanan M.J."/>
            <person name="DeBoy R.T."/>
            <person name="Daugherty S.C."/>
            <person name="Kolonay J.F."/>
            <person name="Madupu R."/>
            <person name="Nelson W.C."/>
            <person name="White O."/>
            <person name="Peterson J.D."/>
            <person name="Khouri H.M."/>
            <person name="Hance I."/>
            <person name="Chris Lee P."/>
            <person name="Holtzapple E.K."/>
            <person name="Scanlan D."/>
            <person name="Tran K."/>
            <person name="Moazzez A."/>
            <person name="Utterback T.R."/>
            <person name="Rizzo M."/>
            <person name="Lee K."/>
            <person name="Kosack D."/>
            <person name="Moestl D."/>
            <person name="Wedler H."/>
            <person name="Lauber J."/>
            <person name="Stjepandic D."/>
            <person name="Hoheisel J."/>
            <person name="Straetz M."/>
            <person name="Heim S."/>
            <person name="Kiewitz C."/>
            <person name="Eisen J.A."/>
            <person name="Timmis K.N."/>
            <person name="Duesterhoeft A."/>
            <person name="Tuemmler B."/>
            <person name="Fraser C.M."/>
        </authorList>
    </citation>
    <scope>NUCLEOTIDE SEQUENCE [LARGE SCALE GENOMIC DNA]</scope>
    <source>
        <strain>ATCC 47054 / DSM 6125 / CFBP 8728 / NCIMB 11950 / KT2440</strain>
    </source>
</reference>
<reference key="2">
    <citation type="journal article" date="2019" name="Environ. Microbiol. Rep.">
        <title>PvdRT-OpmQ and MdtABC-OpmB efflux systems are involved in pyoverdine secretion in Pseudomonas putida KT2440.</title>
        <authorList>
            <person name="Henriquez T."/>
            <person name="Stein N.V."/>
            <person name="Jung H."/>
        </authorList>
    </citation>
    <scope>FUNCTION</scope>
    <scope>INDUCTION</scope>
    <scope>DISRUPTION PHENOTYPE</scope>
    <source>
        <strain>ATCC 47054 / DSM 6125 / CFBP 8728 / NCIMB 11950 / KT2440</strain>
    </source>
</reference>
<reference key="3">
    <citation type="journal article" date="2023" name="FEBS Lett.">
        <title>The ABC transporter family efflux pump PvdRT-OpmQ of Pseudomonas putida KT2440: purification and initial characterization.</title>
        <authorList>
            <person name="Stein N.V."/>
            <person name="Eder M."/>
            <person name="Brameyer S."/>
            <person name="Schwenkert S."/>
            <person name="Jung H."/>
        </authorList>
    </citation>
    <scope>FUNCTION</scope>
    <scope>SUBUNIT</scope>
    <scope>SUBCELLULAR LOCATION</scope>
    <source>
        <strain>ATCC 47054 / DSM 6125 / CFBP 8728 / NCIMB 11950 / KT2440</strain>
    </source>
</reference>
<keyword id="KW-0175">Coiled coil</keyword>
<keyword id="KW-0574">Periplasm</keyword>
<keyword id="KW-1185">Reference proteome</keyword>
<keyword id="KW-0732">Signal</keyword>
<keyword id="KW-0813">Transport</keyword>
<gene>
    <name evidence="7" type="primary">pvdR</name>
    <name evidence="11" type="ordered locus">PP_4209</name>
</gene>
<organism>
    <name type="scientific">Pseudomonas putida (strain ATCC 47054 / DSM 6125 / CFBP 8728 / NCIMB 11950 / KT2440)</name>
    <dbReference type="NCBI Taxonomy" id="160488"/>
    <lineage>
        <taxon>Bacteria</taxon>
        <taxon>Pseudomonadati</taxon>
        <taxon>Pseudomonadota</taxon>
        <taxon>Gammaproteobacteria</taxon>
        <taxon>Pseudomonadales</taxon>
        <taxon>Pseudomonadaceae</taxon>
        <taxon>Pseudomonas</taxon>
    </lineage>
</organism>
<evidence type="ECO:0000250" key="1">
    <source>
        <dbReference type="UniProtKB" id="Q9I191"/>
    </source>
</evidence>
<evidence type="ECO:0000255" key="2"/>
<evidence type="ECO:0000255" key="3">
    <source>
        <dbReference type="PROSITE-ProRule" id="PRU00648"/>
    </source>
</evidence>
<evidence type="ECO:0000256" key="4">
    <source>
        <dbReference type="SAM" id="MobiDB-lite"/>
    </source>
</evidence>
<evidence type="ECO:0000269" key="5">
    <source>
    </source>
</evidence>
<evidence type="ECO:0000269" key="6">
    <source>
    </source>
</evidence>
<evidence type="ECO:0000303" key="7">
    <source>
    </source>
</evidence>
<evidence type="ECO:0000303" key="8">
    <source>
    </source>
</evidence>
<evidence type="ECO:0000305" key="9"/>
<evidence type="ECO:0000305" key="10">
    <source>
    </source>
</evidence>
<evidence type="ECO:0000312" key="11">
    <source>
        <dbReference type="EMBL" id="AAN69790.1"/>
    </source>
</evidence>
<proteinExistence type="evidence at protein level"/>